<sequence length="398" mass="45299">MSVMGEDALVPRARSRLPVMCAAGLGFLTLAVAWLLDSDKFSERAGIIAFGLMLERFIYCICLLAEELLFHSRQRYHGRMSEIFRACFRGSGILGMCAIFLMLMLGGVSFSVKQWSHFNLMCAGYMLLNSLGVLGPAPVEISEICEAKKMNVAHGLAWSFYIGYLKFLLPALEVNVREYSRRERLSSPRLHILLPLNARVPSKPEEEDTNVVFHENLPDLKLDRAGVRKRSYTNSVYKITHNNETFSCILEYATPLLTLYQMSQESSAGFGERERKQQVLLFYRTLSQILDNSLECRNRYRLILLNDEHTGDPHYLSRELFQNLKQQDGEIFMDPTNEVHPVPEEGPVGNCNGALQATFHEEPMSDEPTLMFSRPQSLRSEPVETTDYFNPSSAMKQN</sequence>
<comment type="function">
    <text evidence="2 5 6">Facilitator of innate immune signaling that acts as a sensor of cytosolic DNA from bacteria and viruses and promotes the production of type I interferon (IFN-alpha and IFN-beta) (PubMed:23091644). Innate immune response is triggered in response to non-CpG double-stranded DNA from viruses and bacteria delivered to the cytoplasm (PubMed:23091644). Acts by binding cyclic dinucleotides: recognizes and binds cyclic di-GMP (c-di-GMP), a second messenger produced by bacteria, and cyclic GMP-AMP (cGAMP), a messenger produced by CGAS in response to DNA virus in the cytosol (By similarity). Upon binding of c-di-GMP or cGAMP, STING1 oligomerizes and is able to activate both NF-kappa-B and irf3 transcription pathways to induce expression of type I interferon and exert a potent anti-viral state (PubMed:30842662). Exhibits 2',3' phosphodiester linkage-specific ligand recognition: can bind both 2'-3' linked cGAMP and 3'-3' linked cGAMP but is preferentially activated by 2'-3' linked cGAMP (By similarity). In addition to promote the production of type I interferons, plays a direct role in autophagy (PubMed:30842662). Following cGAMP-binding, STING1 buds from the endoplasmic reticulum into COPII vesicles, which then form the endoplasmic reticulum-Golgi intermediate compartment (ERGIC) (By similarity). The ERGIC serves as the membrane source for LC3 lipidation, leading to formation of autophagosomes that target cytosolic DNA or DNA viruses for degradation by the lysosome (By similarity). Promotes autophagy by acting as a proton channel that directs proton efflux from the Golgi to facilitate LC3 lipidation (By similarity). The autophagy- and interferon-inducing activities can be uncoupled and autophagy induction is independent of TBK1 phosphorylation (By similarity).</text>
</comment>
<comment type="catalytic activity">
    <reaction evidence="2">
        <text>H(+)(in) = H(+)(out)</text>
        <dbReference type="Rhea" id="RHEA:34979"/>
        <dbReference type="ChEBI" id="CHEBI:15378"/>
    </reaction>
</comment>
<comment type="subunit">
    <text evidence="1">Homodimer; forms a homodimer in absence of cyclic nucleotide (c-di-GMP or cGAMP) (By similarity). Homotetramer; in presence of cyclic nucleotide (c-di-GMP or cGAMP), forms tetramers and higher-order oligomers through side-by-side packing (By similarity). Interacts (when phosphorylated) with irf3; following activation and phosphorylation by tbk1, recruits irf3 (By similarity).</text>
</comment>
<comment type="subcellular location">
    <subcellularLocation>
        <location evidence="5">Endoplasmic reticulum membrane</location>
        <topology evidence="3">Multi-pass membrane protein</topology>
    </subcellularLocation>
    <subcellularLocation>
        <location evidence="2">Cytoplasm</location>
        <location evidence="2">Perinuclear region</location>
    </subcellularLocation>
    <subcellularLocation>
        <location evidence="2">Endoplasmic reticulum-Golgi intermediate compartment membrane</location>
        <topology evidence="3">Multi-pass membrane protein</topology>
    </subcellularLocation>
    <subcellularLocation>
        <location evidence="2">Golgi apparatus membrane</location>
        <topology evidence="3">Multi-pass membrane protein</topology>
    </subcellularLocation>
    <subcellularLocation>
        <location evidence="2">Cytoplasmic vesicle</location>
        <location evidence="2">Autophagosome membrane</location>
        <topology evidence="3">Multi-pass membrane protein</topology>
    </subcellularLocation>
    <text evidence="2">In response to double-stranded DNA stimulation, translocates from the endoplasmic reticulum through the endoplasmic reticulum-Golgi intermediate compartment and Golgi to post-Golgi vesicles, where the kinase tbk1 is recruited. Upon cGAMP-binding, translocates to the endoplasmic reticulum-Golgi intermediate compartment (ERGIC) in a process that is dependent on COPII vesicles; STING1-containing ERGIC serves as a membrane source for LC3 lipidation, which is a key step in autophagosome biogenesis.</text>
</comment>
<comment type="domain">
    <text evidence="1 2">In absence of cGAMP, the transmembrane and cytoplasmic regions interact to form an integrated, domain-swapped dimeric assembly (By similarity). In absence of cyclic nucleotide (c-di-GMP or cGAMP), the protein is autoinhibited by an intramolecular interaction between the cyclic dinucleotide-binding domain (CBD) and the C-terminal tail (CTT) (By similarity). Following cGAMP-binding, the cyclic dinucleotide-binding domain (CBD) is closed, leading to a 180 degrees rotation of the CBD domain relative to the transmembrane domain. This rotation is coupled to a conformational change in a loop on the side of the CBD dimer, which leads to the formation of the STING1 tetramer and higher-order oligomers through side-by-side packing (By similarity). The N-terminal part of the CBD region was initially though to contain a fifth transmembrane region (TM5) but is part of the folded, soluble CBD (By similarity).</text>
</comment>
<comment type="domain">
    <text evidence="2">The N-terminal domain interacts with glycerophospholipids and phospholipids.</text>
</comment>
<comment type="PTM">
    <text evidence="1">Phosphorylation by TBK1 leads to activation and production of IFN-beta. Following cyclic nucleotide (c-di-GMP or cGAMP)-binding, activation and translocation from the endoplasmic reticulum, STING1 is phosphorylated by tbk1, leading to recruitment of the transcription factor irf3 to induce type-I interferons and other cytokines.</text>
</comment>
<comment type="similarity">
    <text evidence="8">Belongs to the STING family.</text>
</comment>
<organism>
    <name type="scientific">Danio rerio</name>
    <name type="common">Zebrafish</name>
    <name type="synonym">Brachydanio rerio</name>
    <dbReference type="NCBI Taxonomy" id="7955"/>
    <lineage>
        <taxon>Eukaryota</taxon>
        <taxon>Metazoa</taxon>
        <taxon>Chordata</taxon>
        <taxon>Craniata</taxon>
        <taxon>Vertebrata</taxon>
        <taxon>Euteleostomi</taxon>
        <taxon>Actinopterygii</taxon>
        <taxon>Neopterygii</taxon>
        <taxon>Teleostei</taxon>
        <taxon>Ostariophysi</taxon>
        <taxon>Cypriniformes</taxon>
        <taxon>Danionidae</taxon>
        <taxon>Danioninae</taxon>
        <taxon>Danio</taxon>
    </lineage>
</organism>
<evidence type="ECO:0000250" key="1">
    <source>
        <dbReference type="UniProtKB" id="E1C7U0"/>
    </source>
</evidence>
<evidence type="ECO:0000250" key="2">
    <source>
        <dbReference type="UniProtKB" id="Q86WV6"/>
    </source>
</evidence>
<evidence type="ECO:0000255" key="3"/>
<evidence type="ECO:0000256" key="4">
    <source>
        <dbReference type="SAM" id="MobiDB-lite"/>
    </source>
</evidence>
<evidence type="ECO:0000269" key="5">
    <source>
    </source>
</evidence>
<evidence type="ECO:0000269" key="6">
    <source>
    </source>
</evidence>
<evidence type="ECO:0000303" key="7">
    <source>
    </source>
</evidence>
<evidence type="ECO:0000305" key="8"/>
<evidence type="ECO:0007829" key="9">
    <source>
        <dbReference type="PDB" id="6MYD"/>
    </source>
</evidence>
<protein>
    <recommendedName>
        <fullName evidence="7">Stimulator of interferon genes protein</fullName>
        <shortName evidence="7">STING</shortName>
    </recommendedName>
    <alternativeName>
        <fullName evidence="8">Transmembrane protein 173</fullName>
    </alternativeName>
</protein>
<keyword id="KW-0002">3D-structure</keyword>
<keyword id="KW-0963">Cytoplasm</keyword>
<keyword id="KW-0968">Cytoplasmic vesicle</keyword>
<keyword id="KW-0256">Endoplasmic reticulum</keyword>
<keyword id="KW-0333">Golgi apparatus</keyword>
<keyword id="KW-0391">Immunity</keyword>
<keyword id="KW-0399">Innate immunity</keyword>
<keyword id="KW-0407">Ion channel</keyword>
<keyword id="KW-0406">Ion transport</keyword>
<keyword id="KW-1017">Isopeptide bond</keyword>
<keyword id="KW-0472">Membrane</keyword>
<keyword id="KW-0547">Nucleotide-binding</keyword>
<keyword id="KW-0597">Phosphoprotein</keyword>
<keyword id="KW-1185">Reference proteome</keyword>
<keyword id="KW-0812">Transmembrane</keyword>
<keyword id="KW-1133">Transmembrane helix</keyword>
<keyword id="KW-0813">Transport</keyword>
<feature type="chain" id="PRO_0000447212" description="Stimulator of interferon genes protein">
    <location>
        <begin position="1"/>
        <end position="398"/>
    </location>
</feature>
<feature type="topological domain" description="Cytoplasmic" evidence="8">
    <location>
        <begin position="1"/>
        <end position="16"/>
    </location>
</feature>
<feature type="transmembrane region" description="Helical; Name=1" evidence="3">
    <location>
        <begin position="17"/>
        <end position="37"/>
    </location>
</feature>
<feature type="topological domain" description="Lumenal" evidence="8">
    <location>
        <begin position="38"/>
        <end position="44"/>
    </location>
</feature>
<feature type="transmembrane region" description="Helical; Name=2" evidence="3">
    <location>
        <begin position="45"/>
        <end position="65"/>
    </location>
</feature>
<feature type="topological domain" description="Cytoplasmic" evidence="8">
    <location>
        <begin position="66"/>
        <end position="91"/>
    </location>
</feature>
<feature type="transmembrane region" description="Helical; Name=3" evidence="3">
    <location>
        <begin position="92"/>
        <end position="112"/>
    </location>
</feature>
<feature type="topological domain" description="Lumenal" evidence="8">
    <location>
        <begin position="113"/>
        <end position="120"/>
    </location>
</feature>
<feature type="transmembrane region" description="Helical; Name=4" evidence="3">
    <location>
        <begin position="121"/>
        <end position="141"/>
    </location>
</feature>
<feature type="topological domain" description="Cytoplasmic" evidence="8">
    <location>
        <begin position="142"/>
        <end position="398"/>
    </location>
</feature>
<feature type="region of interest" description="Cyclic dinucleotide-binding domain (CBD)" evidence="2">
    <location>
        <begin position="150"/>
        <end position="331"/>
    </location>
</feature>
<feature type="region of interest" description="Disordered" evidence="4">
    <location>
        <begin position="375"/>
        <end position="398"/>
    </location>
</feature>
<feature type="compositionally biased region" description="Polar residues" evidence="4">
    <location>
        <begin position="387"/>
        <end position="398"/>
    </location>
</feature>
<feature type="binding site" evidence="2">
    <location>
        <position position="159"/>
    </location>
    <ligand>
        <name>2',3'-cGAMP</name>
        <dbReference type="ChEBI" id="CHEBI:143093"/>
    </ligand>
</feature>
<feature type="binding site" evidence="2">
    <location>
        <position position="159"/>
    </location>
    <ligand>
        <name>3',3'-c-di-GMP</name>
        <dbReference type="ChEBI" id="CHEBI:58805"/>
    </ligand>
</feature>
<feature type="binding site" evidence="2">
    <location>
        <position position="164"/>
    </location>
    <ligand>
        <name>2',3'-cGAMP</name>
        <dbReference type="ChEBI" id="CHEBI:143093"/>
    </ligand>
</feature>
<feature type="binding site" evidence="2">
    <location>
        <position position="164"/>
    </location>
    <ligand>
        <name>3',3'-c-di-GMP</name>
        <dbReference type="ChEBI" id="CHEBI:58805"/>
    </ligand>
</feature>
<feature type="binding site" evidence="2">
    <location>
        <begin position="230"/>
        <end position="233"/>
    </location>
    <ligand>
        <name>3',3'-c-di-GMP</name>
        <dbReference type="ChEBI" id="CHEBI:58805"/>
    </ligand>
</feature>
<feature type="binding site" evidence="2">
    <location>
        <position position="230"/>
    </location>
    <ligand>
        <name>2',3'-cGAMP</name>
        <dbReference type="ChEBI" id="CHEBI:143093"/>
    </ligand>
</feature>
<feature type="binding site" evidence="2">
    <location>
        <position position="254"/>
    </location>
    <ligand>
        <name>2',3'-cGAMP</name>
        <dbReference type="ChEBI" id="CHEBI:143093"/>
    </ligand>
</feature>
<feature type="binding site" evidence="2">
    <location>
        <position position="254"/>
    </location>
    <ligand>
        <name>3',3'-c-di-GMP</name>
        <dbReference type="ChEBI" id="CHEBI:58805"/>
    </ligand>
</feature>
<feature type="sequence conflict" description="In Ref. 1; CCI55627." evidence="8" ref="1">
    <original>K</original>
    <variation>E</variation>
    <location>
        <position position="113"/>
    </location>
</feature>
<feature type="sequence conflict" description="In Ref. 1; CCI55627." evidence="8" ref="1">
    <original>E</original>
    <variation>G</variation>
    <location>
        <position position="205"/>
    </location>
</feature>
<feature type="sequence conflict" description="In Ref. 1; CCI55627." evidence="8" ref="1">
    <original>Q</original>
    <variation>R</variation>
    <location>
        <position position="356"/>
    </location>
</feature>
<feature type="strand" evidence="9">
    <location>
        <begin position="383"/>
        <end position="386"/>
    </location>
</feature>
<name>STING_DANRE</name>
<dbReference type="EMBL" id="HE856619">
    <property type="protein sequence ID" value="CCI55627.1"/>
    <property type="molecule type" value="mRNA"/>
</dbReference>
<dbReference type="EMBL" id="FP017217">
    <property type="status" value="NOT_ANNOTATED_CDS"/>
    <property type="molecule type" value="Genomic_DNA"/>
</dbReference>
<dbReference type="RefSeq" id="NP_001265766.1">
    <property type="nucleotide sequence ID" value="NM_001278837.1"/>
</dbReference>
<dbReference type="RefSeq" id="XP_005157178.1">
    <property type="nucleotide sequence ID" value="XM_005157121.5"/>
</dbReference>
<dbReference type="PDB" id="6MYD">
    <property type="method" value="X-ray"/>
    <property type="resolution" value="1.40 A"/>
    <property type="chains" value="B/D=381-388"/>
</dbReference>
<dbReference type="PDBsum" id="6MYD"/>
<dbReference type="SMR" id="E7F4N7"/>
<dbReference type="FunCoup" id="E7F4N7">
    <property type="interactions" value="1449"/>
</dbReference>
<dbReference type="STRING" id="7955.ENSDARP00000148153"/>
<dbReference type="PaxDb" id="7955-ENSDARP00000105858"/>
<dbReference type="Ensembl" id="ENSDART00000128218">
    <property type="protein sequence ID" value="ENSDARP00000105858"/>
    <property type="gene ID" value="ENSDARG00000091058"/>
</dbReference>
<dbReference type="Ensembl" id="ENSDART00000186440">
    <property type="protein sequence ID" value="ENSDARP00000148153"/>
    <property type="gene ID" value="ENSDARG00000091058"/>
</dbReference>
<dbReference type="GeneID" id="101243556"/>
<dbReference type="KEGG" id="dre:101243556"/>
<dbReference type="AGR" id="ZFIN:ZDB-GENE-120921-1"/>
<dbReference type="CTD" id="340061"/>
<dbReference type="ZFIN" id="ZDB-GENE-120921-1">
    <property type="gene designation" value="sting1"/>
</dbReference>
<dbReference type="eggNOG" id="ENOG502R15M">
    <property type="taxonomic scope" value="Eukaryota"/>
</dbReference>
<dbReference type="HOGENOM" id="CLU_062449_0_0_1"/>
<dbReference type="InParanoid" id="E7F4N7"/>
<dbReference type="OMA" id="QYGQAGF"/>
<dbReference type="OrthoDB" id="6053839at2759"/>
<dbReference type="TreeFam" id="TF324444"/>
<dbReference type="Reactome" id="R-DRE-1834941">
    <property type="pathway name" value="STING mediated induction of host immune responses"/>
</dbReference>
<dbReference type="Reactome" id="R-DRE-3134975">
    <property type="pathway name" value="Regulation of innate immune responses to cytosolic DNA"/>
</dbReference>
<dbReference type="Reactome" id="R-DRE-3249367">
    <property type="pathway name" value="STAT6-mediated induction of chemokines"/>
</dbReference>
<dbReference type="Reactome" id="R-DRE-6798695">
    <property type="pathway name" value="Neutrophil degranulation"/>
</dbReference>
<dbReference type="PRO" id="PR:E7F4N7"/>
<dbReference type="Proteomes" id="UP000000437">
    <property type="component" value="Chromosome 14"/>
</dbReference>
<dbReference type="Bgee" id="ENSDARG00000091058">
    <property type="expression patterns" value="Expressed in spleen and 10 other cell types or tissues"/>
</dbReference>
<dbReference type="GO" id="GO:0005776">
    <property type="term" value="C:autophagosome"/>
    <property type="evidence" value="ECO:0000318"/>
    <property type="project" value="GO_Central"/>
</dbReference>
<dbReference type="GO" id="GO:0000421">
    <property type="term" value="C:autophagosome membrane"/>
    <property type="evidence" value="ECO:0007669"/>
    <property type="project" value="UniProtKB-SubCell"/>
</dbReference>
<dbReference type="GO" id="GO:0031410">
    <property type="term" value="C:cytoplasmic vesicle"/>
    <property type="evidence" value="ECO:0007669"/>
    <property type="project" value="UniProtKB-KW"/>
</dbReference>
<dbReference type="GO" id="GO:0005783">
    <property type="term" value="C:endoplasmic reticulum"/>
    <property type="evidence" value="ECO:0000314"/>
    <property type="project" value="ZFIN"/>
</dbReference>
<dbReference type="GO" id="GO:0005789">
    <property type="term" value="C:endoplasmic reticulum membrane"/>
    <property type="evidence" value="ECO:0000318"/>
    <property type="project" value="GO_Central"/>
</dbReference>
<dbReference type="GO" id="GO:0033116">
    <property type="term" value="C:endoplasmic reticulum-Golgi intermediate compartment membrane"/>
    <property type="evidence" value="ECO:0007669"/>
    <property type="project" value="UniProtKB-SubCell"/>
</dbReference>
<dbReference type="GO" id="GO:0000139">
    <property type="term" value="C:Golgi membrane"/>
    <property type="evidence" value="ECO:0007669"/>
    <property type="project" value="UniProtKB-SubCell"/>
</dbReference>
<dbReference type="GO" id="GO:0048471">
    <property type="term" value="C:perinuclear region of cytoplasm"/>
    <property type="evidence" value="ECO:0007669"/>
    <property type="project" value="UniProtKB-SubCell"/>
</dbReference>
<dbReference type="GO" id="GO:0061507">
    <property type="term" value="F:2',3'-cyclic GMP-AMP binding"/>
    <property type="evidence" value="ECO:0000318"/>
    <property type="project" value="GO_Central"/>
</dbReference>
<dbReference type="GO" id="GO:0035438">
    <property type="term" value="F:cyclic-di-GMP binding"/>
    <property type="evidence" value="ECO:0000318"/>
    <property type="project" value="GO_Central"/>
</dbReference>
<dbReference type="GO" id="GO:0015252">
    <property type="term" value="F:proton channel activity"/>
    <property type="evidence" value="ECO:0000250"/>
    <property type="project" value="UniProtKB"/>
</dbReference>
<dbReference type="GO" id="GO:0002218">
    <property type="term" value="P:activation of innate immune response"/>
    <property type="evidence" value="ECO:0000318"/>
    <property type="project" value="GO_Central"/>
</dbReference>
<dbReference type="GO" id="GO:0000045">
    <property type="term" value="P:autophagosome assembly"/>
    <property type="evidence" value="ECO:0000250"/>
    <property type="project" value="UniProtKB"/>
</dbReference>
<dbReference type="GO" id="GO:0140896">
    <property type="term" value="P:cGAS/STING signaling pathway"/>
    <property type="evidence" value="ECO:0000250"/>
    <property type="project" value="UniProtKB"/>
</dbReference>
<dbReference type="GO" id="GO:0002753">
    <property type="term" value="P:cytoplasmic pattern recognition receptor signaling pathway"/>
    <property type="evidence" value="ECO:0000314"/>
    <property type="project" value="ZFIN"/>
</dbReference>
<dbReference type="GO" id="GO:0051607">
    <property type="term" value="P:defense response to virus"/>
    <property type="evidence" value="ECO:0000318"/>
    <property type="project" value="GO_Central"/>
</dbReference>
<dbReference type="GO" id="GO:0045087">
    <property type="term" value="P:innate immune response"/>
    <property type="evidence" value="ECO:0000315"/>
    <property type="project" value="ZFIN"/>
</dbReference>
<dbReference type="GO" id="GO:0002230">
    <property type="term" value="P:positive regulation of defense response to virus by host"/>
    <property type="evidence" value="ECO:0000314"/>
    <property type="project" value="ZFIN"/>
</dbReference>
<dbReference type="GO" id="GO:0016239">
    <property type="term" value="P:positive regulation of macroautophagy"/>
    <property type="evidence" value="ECO:0000314"/>
    <property type="project" value="UniProtKB"/>
</dbReference>
<dbReference type="GO" id="GO:1901224">
    <property type="term" value="P:positive regulation of non-canonical NF-kappaB signal transduction"/>
    <property type="evidence" value="ECO:0000316"/>
    <property type="project" value="ZFIN"/>
</dbReference>
<dbReference type="GO" id="GO:0032481">
    <property type="term" value="P:positive regulation of type I interferon production"/>
    <property type="evidence" value="ECO:0000318"/>
    <property type="project" value="GO_Central"/>
</dbReference>
<dbReference type="GO" id="GO:0010506">
    <property type="term" value="P:regulation of autophagy"/>
    <property type="evidence" value="ECO:0000316"/>
    <property type="project" value="ZFIN"/>
</dbReference>
<dbReference type="GO" id="GO:0032479">
    <property type="term" value="P:regulation of type I interferon production"/>
    <property type="evidence" value="ECO:0000314"/>
    <property type="project" value="ZFIN"/>
</dbReference>
<dbReference type="GO" id="GO:0009615">
    <property type="term" value="P:response to virus"/>
    <property type="evidence" value="ECO:0000315"/>
    <property type="project" value="ZFIN"/>
</dbReference>
<dbReference type="GO" id="GO:0061709">
    <property type="term" value="P:reticulophagy"/>
    <property type="evidence" value="ECO:0000318"/>
    <property type="project" value="GO_Central"/>
</dbReference>
<dbReference type="CDD" id="cd22658">
    <property type="entry name" value="STING_C_metazoan-like"/>
    <property type="match status" value="1"/>
</dbReference>
<dbReference type="FunFam" id="1.20.5.5200:FF:000001">
    <property type="entry name" value="Stimulator of interferon genes protein"/>
    <property type="match status" value="1"/>
</dbReference>
<dbReference type="FunFam" id="3.40.50.12100:FF:000001">
    <property type="entry name" value="Stimulator of interferon genes protein"/>
    <property type="match status" value="1"/>
</dbReference>
<dbReference type="Gene3D" id="1.20.5.5200">
    <property type="match status" value="1"/>
</dbReference>
<dbReference type="Gene3D" id="3.40.50.12100">
    <property type="entry name" value="Stimulator of interferon genes protein"/>
    <property type="match status" value="1"/>
</dbReference>
<dbReference type="InterPro" id="IPR029158">
    <property type="entry name" value="STING"/>
</dbReference>
<dbReference type="InterPro" id="IPR047191">
    <property type="entry name" value="STING_C_chordates"/>
</dbReference>
<dbReference type="InterPro" id="IPR038623">
    <property type="entry name" value="STING_C_sf"/>
</dbReference>
<dbReference type="InterPro" id="IPR055432">
    <property type="entry name" value="STING_LBD"/>
</dbReference>
<dbReference type="InterPro" id="IPR055434">
    <property type="entry name" value="STING_TM"/>
</dbReference>
<dbReference type="PANTHER" id="PTHR34339">
    <property type="entry name" value="STIMULATOR OF INTERFERON GENES PROTEIN"/>
    <property type="match status" value="1"/>
</dbReference>
<dbReference type="PANTHER" id="PTHR34339:SF1">
    <property type="entry name" value="STIMULATOR OF INTERFERON GENES PROTEIN"/>
    <property type="match status" value="1"/>
</dbReference>
<dbReference type="Pfam" id="PF15009">
    <property type="entry name" value="STING_LBD"/>
    <property type="match status" value="1"/>
</dbReference>
<dbReference type="Pfam" id="PF23417">
    <property type="entry name" value="STING_TM"/>
    <property type="match status" value="1"/>
</dbReference>
<proteinExistence type="evidence at protein level"/>
<accession>E7F4N7</accession>
<accession>K4Q6R6</accession>
<reference key="1">
    <citation type="journal article" date="2012" name="PLoS ONE">
        <title>Both STING and MAVS fish orthologs contribute to the induction of interferon mediated by RIG-I.</title>
        <authorList>
            <person name="Biacchesi S."/>
            <person name="Merour E."/>
            <person name="Lamoureux A."/>
            <person name="Bernard J."/>
            <person name="Bremont M."/>
        </authorList>
    </citation>
    <scope>NUCLEOTIDE SEQUENCE [MRNA]</scope>
    <scope>FUNCTION</scope>
    <scope>SUBCELLULAR LOCATION</scope>
</reference>
<reference key="2">
    <citation type="journal article" date="2013" name="Nature">
        <title>The zebrafish reference genome sequence and its relationship to the human genome.</title>
        <authorList>
            <person name="Howe K."/>
            <person name="Clark M.D."/>
            <person name="Torroja C.F."/>
            <person name="Torrance J."/>
            <person name="Berthelot C."/>
            <person name="Muffato M."/>
            <person name="Collins J.E."/>
            <person name="Humphray S."/>
            <person name="McLaren K."/>
            <person name="Matthews L."/>
            <person name="McLaren S."/>
            <person name="Sealy I."/>
            <person name="Caccamo M."/>
            <person name="Churcher C."/>
            <person name="Scott C."/>
            <person name="Barrett J.C."/>
            <person name="Koch R."/>
            <person name="Rauch G.J."/>
            <person name="White S."/>
            <person name="Chow W."/>
            <person name="Kilian B."/>
            <person name="Quintais L.T."/>
            <person name="Guerra-Assuncao J.A."/>
            <person name="Zhou Y."/>
            <person name="Gu Y."/>
            <person name="Yen J."/>
            <person name="Vogel J.H."/>
            <person name="Eyre T."/>
            <person name="Redmond S."/>
            <person name="Banerjee R."/>
            <person name="Chi J."/>
            <person name="Fu B."/>
            <person name="Langley E."/>
            <person name="Maguire S.F."/>
            <person name="Laird G.K."/>
            <person name="Lloyd D."/>
            <person name="Kenyon E."/>
            <person name="Donaldson S."/>
            <person name="Sehra H."/>
            <person name="Almeida-King J."/>
            <person name="Loveland J."/>
            <person name="Trevanion S."/>
            <person name="Jones M."/>
            <person name="Quail M."/>
            <person name="Willey D."/>
            <person name="Hunt A."/>
            <person name="Burton J."/>
            <person name="Sims S."/>
            <person name="McLay K."/>
            <person name="Plumb B."/>
            <person name="Davis J."/>
            <person name="Clee C."/>
            <person name="Oliver K."/>
            <person name="Clark R."/>
            <person name="Riddle C."/>
            <person name="Elliot D."/>
            <person name="Threadgold G."/>
            <person name="Harden G."/>
            <person name="Ware D."/>
            <person name="Begum S."/>
            <person name="Mortimore B."/>
            <person name="Kerry G."/>
            <person name="Heath P."/>
            <person name="Phillimore B."/>
            <person name="Tracey A."/>
            <person name="Corby N."/>
            <person name="Dunn M."/>
            <person name="Johnson C."/>
            <person name="Wood J."/>
            <person name="Clark S."/>
            <person name="Pelan S."/>
            <person name="Griffiths G."/>
            <person name="Smith M."/>
            <person name="Glithero R."/>
            <person name="Howden P."/>
            <person name="Barker N."/>
            <person name="Lloyd C."/>
            <person name="Stevens C."/>
            <person name="Harley J."/>
            <person name="Holt K."/>
            <person name="Panagiotidis G."/>
            <person name="Lovell J."/>
            <person name="Beasley H."/>
            <person name="Henderson C."/>
            <person name="Gordon D."/>
            <person name="Auger K."/>
            <person name="Wright D."/>
            <person name="Collins J."/>
            <person name="Raisen C."/>
            <person name="Dyer L."/>
            <person name="Leung K."/>
            <person name="Robertson L."/>
            <person name="Ambridge K."/>
            <person name="Leongamornlert D."/>
            <person name="McGuire S."/>
            <person name="Gilderthorp R."/>
            <person name="Griffiths C."/>
            <person name="Manthravadi D."/>
            <person name="Nichol S."/>
            <person name="Barker G."/>
            <person name="Whitehead S."/>
            <person name="Kay M."/>
            <person name="Brown J."/>
            <person name="Murnane C."/>
            <person name="Gray E."/>
            <person name="Humphries M."/>
            <person name="Sycamore N."/>
            <person name="Barker D."/>
            <person name="Saunders D."/>
            <person name="Wallis J."/>
            <person name="Babbage A."/>
            <person name="Hammond S."/>
            <person name="Mashreghi-Mohammadi M."/>
            <person name="Barr L."/>
            <person name="Martin S."/>
            <person name="Wray P."/>
            <person name="Ellington A."/>
            <person name="Matthews N."/>
            <person name="Ellwood M."/>
            <person name="Woodmansey R."/>
            <person name="Clark G."/>
            <person name="Cooper J."/>
            <person name="Tromans A."/>
            <person name="Grafham D."/>
            <person name="Skuce C."/>
            <person name="Pandian R."/>
            <person name="Andrews R."/>
            <person name="Harrison E."/>
            <person name="Kimberley A."/>
            <person name="Garnett J."/>
            <person name="Fosker N."/>
            <person name="Hall R."/>
            <person name="Garner P."/>
            <person name="Kelly D."/>
            <person name="Bird C."/>
            <person name="Palmer S."/>
            <person name="Gehring I."/>
            <person name="Berger A."/>
            <person name="Dooley C.M."/>
            <person name="Ersan-Urun Z."/>
            <person name="Eser C."/>
            <person name="Geiger H."/>
            <person name="Geisler M."/>
            <person name="Karotki L."/>
            <person name="Kirn A."/>
            <person name="Konantz J."/>
            <person name="Konantz M."/>
            <person name="Oberlander M."/>
            <person name="Rudolph-Geiger S."/>
            <person name="Teucke M."/>
            <person name="Lanz C."/>
            <person name="Raddatz G."/>
            <person name="Osoegawa K."/>
            <person name="Zhu B."/>
            <person name="Rapp A."/>
            <person name="Widaa S."/>
            <person name="Langford C."/>
            <person name="Yang F."/>
            <person name="Schuster S.C."/>
            <person name="Carter N.P."/>
            <person name="Harrow J."/>
            <person name="Ning Z."/>
            <person name="Herrero J."/>
            <person name="Searle S.M."/>
            <person name="Enright A."/>
            <person name="Geisler R."/>
            <person name="Plasterk R.H."/>
            <person name="Lee C."/>
            <person name="Westerfield M."/>
            <person name="de Jong P.J."/>
            <person name="Zon L.I."/>
            <person name="Postlethwait J.H."/>
            <person name="Nusslein-Volhard C."/>
            <person name="Hubbard T.J."/>
            <person name="Roest Crollius H."/>
            <person name="Rogers J."/>
            <person name="Stemple D.L."/>
        </authorList>
    </citation>
    <scope>NUCLEOTIDE SEQUENCE [LARGE SCALE GENOMIC DNA]</scope>
    <source>
        <strain>Tuebingen</strain>
    </source>
</reference>
<reference key="3">
    <citation type="journal article" date="2019" name="Nature">
        <title>Autophagy induction via STING trafficking is a primordial function of the cGAS pathway.</title>
        <authorList>
            <person name="Gui X."/>
            <person name="Yang H."/>
            <person name="Li T."/>
            <person name="Tan X."/>
            <person name="Shi P."/>
            <person name="Li M."/>
            <person name="Du F."/>
            <person name="Chen Z.J."/>
        </authorList>
    </citation>
    <scope>FUNCTION</scope>
</reference>
<gene>
    <name evidence="2" type="primary">sting1</name>
    <name evidence="7" type="synonym">sting</name>
    <name evidence="2" type="synonym">tmem173</name>
</gene>